<proteinExistence type="inferred from homology"/>
<dbReference type="EC" id="2.1.1.176" evidence="1"/>
<dbReference type="EMBL" id="CP000880">
    <property type="protein sequence ID" value="ABX24008.1"/>
    <property type="molecule type" value="Genomic_DNA"/>
</dbReference>
<dbReference type="SMR" id="A9MN78"/>
<dbReference type="STRING" id="41514.SARI_04219"/>
<dbReference type="KEGG" id="ses:SARI_04219"/>
<dbReference type="HOGENOM" id="CLU_005316_0_4_6"/>
<dbReference type="Proteomes" id="UP000002084">
    <property type="component" value="Chromosome"/>
</dbReference>
<dbReference type="GO" id="GO:0005829">
    <property type="term" value="C:cytosol"/>
    <property type="evidence" value="ECO:0007669"/>
    <property type="project" value="TreeGrafter"/>
</dbReference>
<dbReference type="GO" id="GO:0003723">
    <property type="term" value="F:RNA binding"/>
    <property type="evidence" value="ECO:0007669"/>
    <property type="project" value="UniProtKB-KW"/>
</dbReference>
<dbReference type="GO" id="GO:0009383">
    <property type="term" value="F:rRNA (cytosine-C5-)-methyltransferase activity"/>
    <property type="evidence" value="ECO:0007669"/>
    <property type="project" value="TreeGrafter"/>
</dbReference>
<dbReference type="GO" id="GO:0006355">
    <property type="term" value="P:regulation of DNA-templated transcription"/>
    <property type="evidence" value="ECO:0007669"/>
    <property type="project" value="InterPro"/>
</dbReference>
<dbReference type="GO" id="GO:0070475">
    <property type="term" value="P:rRNA base methylation"/>
    <property type="evidence" value="ECO:0007669"/>
    <property type="project" value="TreeGrafter"/>
</dbReference>
<dbReference type="CDD" id="cd02440">
    <property type="entry name" value="AdoMet_MTases"/>
    <property type="match status" value="1"/>
</dbReference>
<dbReference type="CDD" id="cd00620">
    <property type="entry name" value="Methyltransferase_Sun"/>
    <property type="match status" value="1"/>
</dbReference>
<dbReference type="FunFam" id="1.10.287.730:FF:000001">
    <property type="entry name" value="Ribosomal RNA small subunit methyltransferase B"/>
    <property type="match status" value="1"/>
</dbReference>
<dbReference type="FunFam" id="1.10.940.10:FF:000002">
    <property type="entry name" value="Ribosomal RNA small subunit methyltransferase B"/>
    <property type="match status" value="1"/>
</dbReference>
<dbReference type="FunFam" id="3.30.70.1170:FF:000002">
    <property type="entry name" value="Ribosomal RNA small subunit methyltransferase B"/>
    <property type="match status" value="1"/>
</dbReference>
<dbReference type="FunFam" id="3.40.50.150:FF:000022">
    <property type="entry name" value="Ribosomal RNA small subunit methyltransferase B"/>
    <property type="match status" value="1"/>
</dbReference>
<dbReference type="Gene3D" id="1.10.287.730">
    <property type="entry name" value="Helix hairpin bin"/>
    <property type="match status" value="1"/>
</dbReference>
<dbReference type="Gene3D" id="1.10.940.10">
    <property type="entry name" value="NusB-like"/>
    <property type="match status" value="1"/>
</dbReference>
<dbReference type="Gene3D" id="3.30.70.1170">
    <property type="entry name" value="Sun protein, domain 3"/>
    <property type="match status" value="1"/>
</dbReference>
<dbReference type="Gene3D" id="3.40.50.150">
    <property type="entry name" value="Vaccinia Virus protein VP39"/>
    <property type="match status" value="1"/>
</dbReference>
<dbReference type="HAMAP" id="MF_01856">
    <property type="entry name" value="16SrRNA_methyltr_B"/>
    <property type="match status" value="1"/>
</dbReference>
<dbReference type="InterPro" id="IPR049560">
    <property type="entry name" value="MeTrfase_RsmB-F_NOP2_cat"/>
</dbReference>
<dbReference type="InterPro" id="IPR001678">
    <property type="entry name" value="MeTrfase_RsmB-F_NOP2_dom"/>
</dbReference>
<dbReference type="InterPro" id="IPR035926">
    <property type="entry name" value="NusB-like_sf"/>
</dbReference>
<dbReference type="InterPro" id="IPR006027">
    <property type="entry name" value="NusB_RsmB_TIM44"/>
</dbReference>
<dbReference type="InterPro" id="IPR023267">
    <property type="entry name" value="RCMT"/>
</dbReference>
<dbReference type="InterPro" id="IPR004573">
    <property type="entry name" value="rRNA_ssu_MeTfrase_B"/>
</dbReference>
<dbReference type="InterPro" id="IPR023541">
    <property type="entry name" value="rRNA_ssu_MeTfrase_B_ent"/>
</dbReference>
<dbReference type="InterPro" id="IPR054728">
    <property type="entry name" value="RsmB-like_ferredoxin"/>
</dbReference>
<dbReference type="InterPro" id="IPR048019">
    <property type="entry name" value="RsmB-like_N"/>
</dbReference>
<dbReference type="InterPro" id="IPR018314">
    <property type="entry name" value="RsmB/NOL1/NOP2-like_CS"/>
</dbReference>
<dbReference type="InterPro" id="IPR029063">
    <property type="entry name" value="SAM-dependent_MTases_sf"/>
</dbReference>
<dbReference type="NCBIfam" id="NF008149">
    <property type="entry name" value="PRK10901.1"/>
    <property type="match status" value="1"/>
</dbReference>
<dbReference type="NCBIfam" id="NF011494">
    <property type="entry name" value="PRK14902.1"/>
    <property type="match status" value="1"/>
</dbReference>
<dbReference type="NCBIfam" id="TIGR00563">
    <property type="entry name" value="rsmB"/>
    <property type="match status" value="1"/>
</dbReference>
<dbReference type="PANTHER" id="PTHR22807:SF61">
    <property type="entry name" value="NOL1_NOP2_SUN FAMILY PROTEIN _ ANTITERMINATION NUSB DOMAIN-CONTAINING PROTEIN"/>
    <property type="match status" value="1"/>
</dbReference>
<dbReference type="PANTHER" id="PTHR22807">
    <property type="entry name" value="NOP2 YEAST -RELATED NOL1/NOP2/FMU SUN DOMAIN-CONTAINING"/>
    <property type="match status" value="1"/>
</dbReference>
<dbReference type="Pfam" id="PF01189">
    <property type="entry name" value="Methyltr_RsmB-F"/>
    <property type="match status" value="1"/>
</dbReference>
<dbReference type="Pfam" id="PF01029">
    <property type="entry name" value="NusB"/>
    <property type="match status" value="1"/>
</dbReference>
<dbReference type="Pfam" id="PF22458">
    <property type="entry name" value="RsmF-B_ferredox"/>
    <property type="match status" value="1"/>
</dbReference>
<dbReference type="PRINTS" id="PR02008">
    <property type="entry name" value="RCMTFAMILY"/>
</dbReference>
<dbReference type="SUPFAM" id="SSF48013">
    <property type="entry name" value="NusB-like"/>
    <property type="match status" value="1"/>
</dbReference>
<dbReference type="SUPFAM" id="SSF53335">
    <property type="entry name" value="S-adenosyl-L-methionine-dependent methyltransferases"/>
    <property type="match status" value="1"/>
</dbReference>
<dbReference type="PROSITE" id="PS01153">
    <property type="entry name" value="NOL1_NOP2_SUN"/>
    <property type="match status" value="1"/>
</dbReference>
<dbReference type="PROSITE" id="PS51686">
    <property type="entry name" value="SAM_MT_RSMB_NOP"/>
    <property type="match status" value="1"/>
</dbReference>
<organism>
    <name type="scientific">Salmonella arizonae (strain ATCC BAA-731 / CDC346-86 / RSK2980)</name>
    <dbReference type="NCBI Taxonomy" id="41514"/>
    <lineage>
        <taxon>Bacteria</taxon>
        <taxon>Pseudomonadati</taxon>
        <taxon>Pseudomonadota</taxon>
        <taxon>Gammaproteobacteria</taxon>
        <taxon>Enterobacterales</taxon>
        <taxon>Enterobacteriaceae</taxon>
        <taxon>Salmonella</taxon>
    </lineage>
</organism>
<reference key="1">
    <citation type="submission" date="2007-11" db="EMBL/GenBank/DDBJ databases">
        <authorList>
            <consortium name="The Salmonella enterica serovar Arizonae Genome Sequencing Project"/>
            <person name="McClelland M."/>
            <person name="Sanderson E.K."/>
            <person name="Porwollik S."/>
            <person name="Spieth J."/>
            <person name="Clifton W.S."/>
            <person name="Fulton R."/>
            <person name="Chunyan W."/>
            <person name="Wollam A."/>
            <person name="Shah N."/>
            <person name="Pepin K."/>
            <person name="Bhonagiri V."/>
            <person name="Nash W."/>
            <person name="Johnson M."/>
            <person name="Thiruvilangam P."/>
            <person name="Wilson R."/>
        </authorList>
    </citation>
    <scope>NUCLEOTIDE SEQUENCE [LARGE SCALE GENOMIC DNA]</scope>
    <source>
        <strain>ATCC BAA-731 / CDC346-86 / RSK2980</strain>
    </source>
</reference>
<keyword id="KW-0963">Cytoplasm</keyword>
<keyword id="KW-0489">Methyltransferase</keyword>
<keyword id="KW-1185">Reference proteome</keyword>
<keyword id="KW-0694">RNA-binding</keyword>
<keyword id="KW-0698">rRNA processing</keyword>
<keyword id="KW-0949">S-adenosyl-L-methionine</keyword>
<keyword id="KW-0808">Transferase</keyword>
<feature type="chain" id="PRO_0000366164" description="Ribosomal RNA small subunit methyltransferase B">
    <location>
        <begin position="1"/>
        <end position="429"/>
    </location>
</feature>
<feature type="active site" description="Nucleophile" evidence="1">
    <location>
        <position position="375"/>
    </location>
</feature>
<feature type="binding site" evidence="1">
    <location>
        <begin position="254"/>
        <end position="260"/>
    </location>
    <ligand>
        <name>S-adenosyl-L-methionine</name>
        <dbReference type="ChEBI" id="CHEBI:59789"/>
    </ligand>
</feature>
<feature type="binding site" evidence="1">
    <location>
        <position position="277"/>
    </location>
    <ligand>
        <name>S-adenosyl-L-methionine</name>
        <dbReference type="ChEBI" id="CHEBI:59789"/>
    </ligand>
</feature>
<feature type="binding site" evidence="1">
    <location>
        <position position="303"/>
    </location>
    <ligand>
        <name>S-adenosyl-L-methionine</name>
        <dbReference type="ChEBI" id="CHEBI:59789"/>
    </ligand>
</feature>
<feature type="binding site" evidence="1">
    <location>
        <position position="322"/>
    </location>
    <ligand>
        <name>S-adenosyl-L-methionine</name>
        <dbReference type="ChEBI" id="CHEBI:59789"/>
    </ligand>
</feature>
<evidence type="ECO:0000255" key="1">
    <source>
        <dbReference type="HAMAP-Rule" id="MF_01856"/>
    </source>
</evidence>
<accession>A9MN78</accession>
<comment type="function">
    <text evidence="1">Specifically methylates the cytosine at position 967 (m5C967) of 16S rRNA.</text>
</comment>
<comment type="catalytic activity">
    <reaction evidence="1">
        <text>cytidine(967) in 16S rRNA + S-adenosyl-L-methionine = 5-methylcytidine(967) in 16S rRNA + S-adenosyl-L-homocysteine + H(+)</text>
        <dbReference type="Rhea" id="RHEA:42748"/>
        <dbReference type="Rhea" id="RHEA-COMP:10219"/>
        <dbReference type="Rhea" id="RHEA-COMP:10220"/>
        <dbReference type="ChEBI" id="CHEBI:15378"/>
        <dbReference type="ChEBI" id="CHEBI:57856"/>
        <dbReference type="ChEBI" id="CHEBI:59789"/>
        <dbReference type="ChEBI" id="CHEBI:74483"/>
        <dbReference type="ChEBI" id="CHEBI:82748"/>
        <dbReference type="EC" id="2.1.1.176"/>
    </reaction>
</comment>
<comment type="subcellular location">
    <subcellularLocation>
        <location evidence="1">Cytoplasm</location>
    </subcellularLocation>
</comment>
<comment type="similarity">
    <text evidence="1">Belongs to the class I-like SAM-binding methyltransferase superfamily. RsmB/NOP family.</text>
</comment>
<name>RSMB_SALAR</name>
<gene>
    <name evidence="1" type="primary">rsmB</name>
    <name evidence="1" type="synonym">sun</name>
    <name type="ordered locus">SARI_04219</name>
</gene>
<sequence>MKKQNNLRSLAAQAVEQVVEQGQSLSNVLPPLQQKVADKDKALLQELCFGVLRTLSQLEWLINKLMSRPMTGKQRTVHYLIMVGFYQLLYTRVPPHAALAETVEGAVSIKRPQLKGLINGVLRQFQRQQETLLNEFATSDARFLHPGWLVKRLQNAYPTQWQHIIEANNQRPPMWLRVNRTHHTRDGWLGLLEDAGMKGYPHPDYPDAVRLETPAPVHALPGFAEGWVTVQDASAQKCVAFLAPQNGEHILDLCAAPGGKTTHILEAAPEADVLAVDVDEQRLSRIYDNLKRLGMKATVKQGDGRYPAQWCDEQQFDRILLDAPCSATGVIRRHPDIKWLRRDRDIAELAKLQAEILDTVWPRLKPGGTLVYATCSVLPEENSAQINAFLQRTPDAALSETGTPDQPGQQNLPGAEEGDGFFYAKLIKK</sequence>
<protein>
    <recommendedName>
        <fullName evidence="1">Ribosomal RNA small subunit methyltransferase B</fullName>
        <ecNumber evidence="1">2.1.1.176</ecNumber>
    </recommendedName>
    <alternativeName>
        <fullName evidence="1">16S rRNA m5C967 methyltransferase</fullName>
    </alternativeName>
    <alternativeName>
        <fullName evidence="1">rRNA (cytosine-C(5)-)-methyltransferase RsmB</fullName>
    </alternativeName>
</protein>